<keyword id="KW-0007">Acetylation</keyword>
<keyword id="KW-0148">Chlorophyll</keyword>
<keyword id="KW-0150">Chloroplast</keyword>
<keyword id="KW-0157">Chromophore</keyword>
<keyword id="KW-0249">Electron transport</keyword>
<keyword id="KW-0408">Iron</keyword>
<keyword id="KW-0460">Magnesium</keyword>
<keyword id="KW-0472">Membrane</keyword>
<keyword id="KW-0479">Metal-binding</keyword>
<keyword id="KW-0560">Oxidoreductase</keyword>
<keyword id="KW-0597">Phosphoprotein</keyword>
<keyword id="KW-0602">Photosynthesis</keyword>
<keyword id="KW-0604">Photosystem II</keyword>
<keyword id="KW-0934">Plastid</keyword>
<keyword id="KW-0793">Thylakoid</keyword>
<keyword id="KW-0812">Transmembrane</keyword>
<keyword id="KW-1133">Transmembrane helix</keyword>
<keyword id="KW-0813">Transport</keyword>
<comment type="function">
    <text evidence="2">Photosystem II (PSII) is a light-driven water:plastoquinone oxidoreductase that uses light energy to abstract electrons from H(2)O, generating O(2) and a proton gradient subsequently used for ATP formation. It consists of a core antenna complex that captures photons, and an electron transfer chain that converts photonic excitation into a charge separation. The D1/D2 (PsbA/PsbD) reaction center heterodimer binds P680, the primary electron donor of PSII as well as several subsequent electron acceptors. D2 is needed for assembly of a stable PSII complex.</text>
</comment>
<comment type="catalytic activity">
    <reaction evidence="2">
        <text>2 a plastoquinone + 4 hnu + 2 H2O = 2 a plastoquinol + O2</text>
        <dbReference type="Rhea" id="RHEA:36359"/>
        <dbReference type="Rhea" id="RHEA-COMP:9561"/>
        <dbReference type="Rhea" id="RHEA-COMP:9562"/>
        <dbReference type="ChEBI" id="CHEBI:15377"/>
        <dbReference type="ChEBI" id="CHEBI:15379"/>
        <dbReference type="ChEBI" id="CHEBI:17757"/>
        <dbReference type="ChEBI" id="CHEBI:30212"/>
        <dbReference type="ChEBI" id="CHEBI:62192"/>
        <dbReference type="EC" id="1.10.3.9"/>
    </reaction>
</comment>
<comment type="cofactor">
    <text evidence="2">The D1/D2 heterodimer binds P680, chlorophylls that are the primary electron donor of PSII, and subsequent electron acceptors. It shares a non-heme iron and each subunit binds pheophytin, quinone, additional chlorophylls, carotenoids and lipids. There is also a Cl(-1) ion associated with D1 and D2, which is required for oxygen evolution. The PSII complex binds additional chlorophylls, carotenoids and specific lipids.</text>
</comment>
<comment type="subunit">
    <text evidence="2">PSII is composed of 1 copy each of membrane proteins PsbA, PsbB, PsbC, PsbD, PsbE, PsbF, PsbH, PsbI, PsbJ, PsbK, PsbL, PsbM, PsbT, PsbX, PsbY, PsbZ, Psb30/Ycf12, at least 3 peripheral proteins of the oxygen-evolving complex and a large number of cofactors. It forms dimeric complexes.</text>
</comment>
<comment type="subcellular location">
    <subcellularLocation>
        <location evidence="2">Plastid</location>
        <location evidence="2">Chloroplast thylakoid membrane</location>
        <topology evidence="2">Multi-pass membrane protein</topology>
    </subcellularLocation>
</comment>
<comment type="miscellaneous">
    <text evidence="2">2 of the reaction center chlorophylls (ChlD1 and ChlD2) are entirely coordinated by water.</text>
</comment>
<comment type="similarity">
    <text evidence="2">Belongs to the reaction center PufL/M/PsbA/D family.</text>
</comment>
<feature type="initiator methionine" description="Removed" evidence="1">
    <location>
        <position position="1"/>
    </location>
</feature>
<feature type="chain" id="PRO_0000090513" description="Photosystem II D2 protein">
    <location>
        <begin position="2"/>
        <end position="353"/>
    </location>
</feature>
<feature type="transmembrane region" description="Helical" evidence="2">
    <location>
        <begin position="41"/>
        <end position="61"/>
    </location>
</feature>
<feature type="transmembrane region" description="Helical" evidence="2">
    <location>
        <begin position="125"/>
        <end position="141"/>
    </location>
</feature>
<feature type="transmembrane region" description="Helical" evidence="2">
    <location>
        <begin position="153"/>
        <end position="166"/>
    </location>
</feature>
<feature type="transmembrane region" description="Helical" evidence="2">
    <location>
        <begin position="208"/>
        <end position="228"/>
    </location>
</feature>
<feature type="transmembrane region" description="Helical" evidence="2">
    <location>
        <begin position="279"/>
        <end position="295"/>
    </location>
</feature>
<feature type="binding site" description="axial binding residue" evidence="2">
    <location>
        <position position="118"/>
    </location>
    <ligand>
        <name>chlorophyll a</name>
        <dbReference type="ChEBI" id="CHEBI:58416"/>
        <label>ChlzD2</label>
    </ligand>
    <ligandPart>
        <name>Mg</name>
        <dbReference type="ChEBI" id="CHEBI:25107"/>
    </ligandPart>
</feature>
<feature type="binding site" evidence="2">
    <location>
        <position position="130"/>
    </location>
    <ligand>
        <name>pheophytin a</name>
        <dbReference type="ChEBI" id="CHEBI:136840"/>
        <label>D2</label>
    </ligand>
</feature>
<feature type="binding site" evidence="2">
    <location>
        <position position="143"/>
    </location>
    <ligand>
        <name>pheophytin a</name>
        <dbReference type="ChEBI" id="CHEBI:136840"/>
        <label>D2</label>
    </ligand>
</feature>
<feature type="binding site" description="axial binding residue" evidence="2">
    <location>
        <position position="198"/>
    </location>
    <ligand>
        <name>chlorophyll a</name>
        <dbReference type="ChEBI" id="CHEBI:58416"/>
        <label>PD2</label>
    </ligand>
    <ligandPart>
        <name>Mg</name>
        <dbReference type="ChEBI" id="CHEBI:25107"/>
    </ligandPart>
</feature>
<feature type="binding site" evidence="2">
    <location>
        <position position="215"/>
    </location>
    <ligand>
        <name>a plastoquinone</name>
        <dbReference type="ChEBI" id="CHEBI:17757"/>
        <label>Q(A)</label>
    </ligand>
</feature>
<feature type="binding site" evidence="2">
    <location>
        <position position="215"/>
    </location>
    <ligand>
        <name>Fe cation</name>
        <dbReference type="ChEBI" id="CHEBI:24875"/>
        <note>ligand shared with heterodimeric partner</note>
    </ligand>
</feature>
<feature type="binding site" evidence="2">
    <location>
        <position position="262"/>
    </location>
    <ligand>
        <name>a plastoquinone</name>
        <dbReference type="ChEBI" id="CHEBI:17757"/>
        <label>Q(A)</label>
    </ligand>
</feature>
<feature type="binding site" evidence="2">
    <location>
        <position position="269"/>
    </location>
    <ligand>
        <name>Fe cation</name>
        <dbReference type="ChEBI" id="CHEBI:24875"/>
        <note>ligand shared with heterodimeric partner</note>
    </ligand>
</feature>
<feature type="modified residue" description="N-acetylthreonine" evidence="1">
    <location>
        <position position="2"/>
    </location>
</feature>
<feature type="modified residue" description="Phosphothreonine" evidence="1">
    <location>
        <position position="2"/>
    </location>
</feature>
<sequence length="353" mass="39578">MTIALGKFTKDEKDLFDIMDDWLRRDRFVFVGWSGLLLFPCAYFALGGWFTGTTFVTSWYTHGLASSYLEGCNFLTAAVSTPANSLAHSLLLLWGPEAQGDFTRWCQLGGLWTFVALHGAFALIGFMLRQFEIARSVQLRPYNAIAFSGPIAVFVSVFLIYPLGQSGWFFAPSFGVAAIFRFILFFQGFHNWTLNPFHMMGVAGVLGAALLCAIHGATVENTLFEDGDGANTFRAFNPTQAEETYSMVTANRFWSQIFGVAFSNKRWLHFFMLFVPVTGLWMSALGVVGLALNLRAYDFVSQEIRAAEDPEFETFYTKNILLNEGIRAWMAAQDQPHENLIFPEEVLPRGNAL</sequence>
<name>PSBD_OENEH</name>
<protein>
    <recommendedName>
        <fullName evidence="2">Photosystem II D2 protein</fullName>
        <shortName evidence="2">PSII D2 protein</shortName>
        <ecNumber evidence="2">1.10.3.9</ecNumber>
    </recommendedName>
    <alternativeName>
        <fullName evidence="2">Photosystem Q(A) protein</fullName>
    </alternativeName>
</protein>
<gene>
    <name evidence="2" type="primary">psbD</name>
</gene>
<accession>Q9MTN1</accession>
<proteinExistence type="inferred from homology"/>
<organism>
    <name type="scientific">Oenothera elata subsp. hookeri</name>
    <name type="common">Hooker's evening primrose</name>
    <name type="synonym">Oenothera hookeri</name>
    <dbReference type="NCBI Taxonomy" id="85636"/>
    <lineage>
        <taxon>Eukaryota</taxon>
        <taxon>Viridiplantae</taxon>
        <taxon>Streptophyta</taxon>
        <taxon>Embryophyta</taxon>
        <taxon>Tracheophyta</taxon>
        <taxon>Spermatophyta</taxon>
        <taxon>Magnoliopsida</taxon>
        <taxon>eudicotyledons</taxon>
        <taxon>Gunneridae</taxon>
        <taxon>Pentapetalae</taxon>
        <taxon>rosids</taxon>
        <taxon>malvids</taxon>
        <taxon>Myrtales</taxon>
        <taxon>Onagraceae</taxon>
        <taxon>Onagroideae</taxon>
        <taxon>Onagreae</taxon>
        <taxon>Oenothera</taxon>
    </lineage>
</organism>
<reference key="1">
    <citation type="journal article" date="2000" name="Mol. Gen. Genet.">
        <title>Complete nucleotide sequence of the Oenothera elata plastid chromosome, representing plastome I of the five distinguishable Euoenothera plastomes.</title>
        <authorList>
            <person name="Hupfer H."/>
            <person name="Swiatek M."/>
            <person name="Hornung S."/>
            <person name="Herrmann R.G."/>
            <person name="Maier R.M."/>
            <person name="Chiu W.-L."/>
            <person name="Sears B."/>
        </authorList>
    </citation>
    <scope>NUCLEOTIDE SEQUENCE [LARGE SCALE GENOMIC DNA]</scope>
    <source>
        <strain>cv. Johansen</strain>
    </source>
</reference>
<reference key="2">
    <citation type="journal article" date="2008" name="Nucleic Acids Res.">
        <title>The complete nucleotide sequences of the five genetically distinct plastid genomes of Oenothera, subsection Oenothera: I. Sequence evaluation and plastome evolution.</title>
        <authorList>
            <person name="Greiner S."/>
            <person name="Wang X."/>
            <person name="Rauwolf U."/>
            <person name="Silber M.V."/>
            <person name="Mayer K."/>
            <person name="Meurer J."/>
            <person name="Haberer G."/>
            <person name="Herrmann R.G."/>
        </authorList>
    </citation>
    <scope>SEQUENCE REVISION TO 202 AND 221</scope>
</reference>
<dbReference type="EC" id="1.10.3.9" evidence="2"/>
<dbReference type="EMBL" id="AJ271079">
    <property type="protein sequence ID" value="CAB67144.2"/>
    <property type="molecule type" value="Genomic_DNA"/>
</dbReference>
<dbReference type="RefSeq" id="NP_084679.2">
    <property type="nucleotide sequence ID" value="NC_002693.2"/>
</dbReference>
<dbReference type="SMR" id="Q9MTN1"/>
<dbReference type="GeneID" id="802707"/>
<dbReference type="GO" id="GO:0009535">
    <property type="term" value="C:chloroplast thylakoid membrane"/>
    <property type="evidence" value="ECO:0007669"/>
    <property type="project" value="UniProtKB-SubCell"/>
</dbReference>
<dbReference type="GO" id="GO:0009523">
    <property type="term" value="C:photosystem II"/>
    <property type="evidence" value="ECO:0007669"/>
    <property type="project" value="UniProtKB-KW"/>
</dbReference>
<dbReference type="GO" id="GO:0016168">
    <property type="term" value="F:chlorophyll binding"/>
    <property type="evidence" value="ECO:0007669"/>
    <property type="project" value="UniProtKB-UniRule"/>
</dbReference>
<dbReference type="GO" id="GO:0045156">
    <property type="term" value="F:electron transporter, transferring electrons within the cyclic electron transport pathway of photosynthesis activity"/>
    <property type="evidence" value="ECO:0007669"/>
    <property type="project" value="InterPro"/>
</dbReference>
<dbReference type="GO" id="GO:0005506">
    <property type="term" value="F:iron ion binding"/>
    <property type="evidence" value="ECO:0007669"/>
    <property type="project" value="UniProtKB-UniRule"/>
</dbReference>
<dbReference type="GO" id="GO:0010242">
    <property type="term" value="F:oxygen evolving activity"/>
    <property type="evidence" value="ECO:0007669"/>
    <property type="project" value="UniProtKB-EC"/>
</dbReference>
<dbReference type="GO" id="GO:0009772">
    <property type="term" value="P:photosynthetic electron transport in photosystem II"/>
    <property type="evidence" value="ECO:0007669"/>
    <property type="project" value="InterPro"/>
</dbReference>
<dbReference type="CDD" id="cd09288">
    <property type="entry name" value="Photosystem-II_D2"/>
    <property type="match status" value="1"/>
</dbReference>
<dbReference type="FunFam" id="1.20.85.10:FF:000001">
    <property type="entry name" value="photosystem II D2 protein-like"/>
    <property type="match status" value="1"/>
</dbReference>
<dbReference type="Gene3D" id="1.20.85.10">
    <property type="entry name" value="Photosystem II protein D1-like"/>
    <property type="match status" value="1"/>
</dbReference>
<dbReference type="HAMAP" id="MF_01383">
    <property type="entry name" value="PSII_PsbD_D2"/>
    <property type="match status" value="1"/>
</dbReference>
<dbReference type="InterPro" id="IPR055266">
    <property type="entry name" value="D1/D2"/>
</dbReference>
<dbReference type="InterPro" id="IPR036854">
    <property type="entry name" value="Photo_II_D1/D2_sf"/>
</dbReference>
<dbReference type="InterPro" id="IPR000484">
    <property type="entry name" value="Photo_RC_L/M"/>
</dbReference>
<dbReference type="InterPro" id="IPR055265">
    <property type="entry name" value="Photo_RC_L/M_CS"/>
</dbReference>
<dbReference type="InterPro" id="IPR005868">
    <property type="entry name" value="PSII_PsbD/D2"/>
</dbReference>
<dbReference type="NCBIfam" id="TIGR01152">
    <property type="entry name" value="psbD"/>
    <property type="match status" value="1"/>
</dbReference>
<dbReference type="PANTHER" id="PTHR33149:SF57">
    <property type="entry name" value="PHOTOSYSTEM II D2 PROTEIN"/>
    <property type="match status" value="1"/>
</dbReference>
<dbReference type="PANTHER" id="PTHR33149">
    <property type="entry name" value="PHOTOSYSTEM II PROTEIN D1"/>
    <property type="match status" value="1"/>
</dbReference>
<dbReference type="Pfam" id="PF00124">
    <property type="entry name" value="Photo_RC"/>
    <property type="match status" value="1"/>
</dbReference>
<dbReference type="PRINTS" id="PR00256">
    <property type="entry name" value="REACTNCENTRE"/>
</dbReference>
<dbReference type="SUPFAM" id="SSF81483">
    <property type="entry name" value="Bacterial photosystem II reaction centre, L and M subunits"/>
    <property type="match status" value="1"/>
</dbReference>
<dbReference type="PROSITE" id="PS00244">
    <property type="entry name" value="REACTION_CENTER"/>
    <property type="match status" value="1"/>
</dbReference>
<evidence type="ECO:0000250" key="1">
    <source>
        <dbReference type="UniProtKB" id="P56761"/>
    </source>
</evidence>
<evidence type="ECO:0000255" key="2">
    <source>
        <dbReference type="HAMAP-Rule" id="MF_01383"/>
    </source>
</evidence>
<geneLocation type="chloroplast"/>